<comment type="similarity">
    <text evidence="1">Belongs to the bacterial ribosomal protein bS16 family.</text>
</comment>
<evidence type="ECO:0000255" key="1">
    <source>
        <dbReference type="HAMAP-Rule" id="MF_00385"/>
    </source>
</evidence>
<evidence type="ECO:0000305" key="2"/>
<organism>
    <name type="scientific">Verminephrobacter eiseniae (strain EF01-2)</name>
    <dbReference type="NCBI Taxonomy" id="391735"/>
    <lineage>
        <taxon>Bacteria</taxon>
        <taxon>Pseudomonadati</taxon>
        <taxon>Pseudomonadota</taxon>
        <taxon>Betaproteobacteria</taxon>
        <taxon>Burkholderiales</taxon>
        <taxon>Comamonadaceae</taxon>
        <taxon>Verminephrobacter</taxon>
    </lineage>
</organism>
<keyword id="KW-1185">Reference proteome</keyword>
<keyword id="KW-0687">Ribonucleoprotein</keyword>
<keyword id="KW-0689">Ribosomal protein</keyword>
<accession>A1WPT9</accession>
<proteinExistence type="inferred from homology"/>
<name>RS16_VEREI</name>
<reference key="1">
    <citation type="submission" date="2006-12" db="EMBL/GenBank/DDBJ databases">
        <title>Complete sequence of chromosome 1 of Verminephrobacter eiseniae EF01-2.</title>
        <authorList>
            <person name="Copeland A."/>
            <person name="Lucas S."/>
            <person name="Lapidus A."/>
            <person name="Barry K."/>
            <person name="Detter J.C."/>
            <person name="Glavina del Rio T."/>
            <person name="Dalin E."/>
            <person name="Tice H."/>
            <person name="Pitluck S."/>
            <person name="Chertkov O."/>
            <person name="Brettin T."/>
            <person name="Bruce D."/>
            <person name="Han C."/>
            <person name="Tapia R."/>
            <person name="Gilna P."/>
            <person name="Schmutz J."/>
            <person name="Larimer F."/>
            <person name="Land M."/>
            <person name="Hauser L."/>
            <person name="Kyrpides N."/>
            <person name="Kim E."/>
            <person name="Stahl D."/>
            <person name="Richardson P."/>
        </authorList>
    </citation>
    <scope>NUCLEOTIDE SEQUENCE [LARGE SCALE GENOMIC DNA]</scope>
    <source>
        <strain>EF01-2</strain>
    </source>
</reference>
<dbReference type="EMBL" id="CP000542">
    <property type="protein sequence ID" value="ABM59646.1"/>
    <property type="molecule type" value="Genomic_DNA"/>
</dbReference>
<dbReference type="RefSeq" id="WP_011811633.1">
    <property type="nucleotide sequence ID" value="NC_008786.1"/>
</dbReference>
<dbReference type="SMR" id="A1WPT9"/>
<dbReference type="STRING" id="391735.Veis_3939"/>
<dbReference type="GeneID" id="76462291"/>
<dbReference type="KEGG" id="vei:Veis_3939"/>
<dbReference type="eggNOG" id="COG0228">
    <property type="taxonomic scope" value="Bacteria"/>
</dbReference>
<dbReference type="HOGENOM" id="CLU_100590_5_1_4"/>
<dbReference type="OrthoDB" id="9807878at2"/>
<dbReference type="Proteomes" id="UP000000374">
    <property type="component" value="Chromosome"/>
</dbReference>
<dbReference type="GO" id="GO:0005737">
    <property type="term" value="C:cytoplasm"/>
    <property type="evidence" value="ECO:0007669"/>
    <property type="project" value="UniProtKB-ARBA"/>
</dbReference>
<dbReference type="GO" id="GO:0015935">
    <property type="term" value="C:small ribosomal subunit"/>
    <property type="evidence" value="ECO:0007669"/>
    <property type="project" value="TreeGrafter"/>
</dbReference>
<dbReference type="GO" id="GO:0003735">
    <property type="term" value="F:structural constituent of ribosome"/>
    <property type="evidence" value="ECO:0007669"/>
    <property type="project" value="InterPro"/>
</dbReference>
<dbReference type="GO" id="GO:0006412">
    <property type="term" value="P:translation"/>
    <property type="evidence" value="ECO:0007669"/>
    <property type="project" value="UniProtKB-UniRule"/>
</dbReference>
<dbReference type="Gene3D" id="3.30.1320.10">
    <property type="match status" value="1"/>
</dbReference>
<dbReference type="HAMAP" id="MF_00385">
    <property type="entry name" value="Ribosomal_bS16"/>
    <property type="match status" value="1"/>
</dbReference>
<dbReference type="InterPro" id="IPR000307">
    <property type="entry name" value="Ribosomal_bS16"/>
</dbReference>
<dbReference type="InterPro" id="IPR020592">
    <property type="entry name" value="Ribosomal_bS16_CS"/>
</dbReference>
<dbReference type="InterPro" id="IPR023803">
    <property type="entry name" value="Ribosomal_bS16_dom_sf"/>
</dbReference>
<dbReference type="NCBIfam" id="TIGR00002">
    <property type="entry name" value="S16"/>
    <property type="match status" value="1"/>
</dbReference>
<dbReference type="PANTHER" id="PTHR12919">
    <property type="entry name" value="30S RIBOSOMAL PROTEIN S16"/>
    <property type="match status" value="1"/>
</dbReference>
<dbReference type="PANTHER" id="PTHR12919:SF20">
    <property type="entry name" value="SMALL RIBOSOMAL SUBUNIT PROTEIN BS16M"/>
    <property type="match status" value="1"/>
</dbReference>
<dbReference type="Pfam" id="PF00886">
    <property type="entry name" value="Ribosomal_S16"/>
    <property type="match status" value="1"/>
</dbReference>
<dbReference type="SUPFAM" id="SSF54565">
    <property type="entry name" value="Ribosomal protein S16"/>
    <property type="match status" value="1"/>
</dbReference>
<dbReference type="PROSITE" id="PS00732">
    <property type="entry name" value="RIBOSOMAL_S16"/>
    <property type="match status" value="1"/>
</dbReference>
<sequence>MVVIRLSRGGAKGRPFFNIVVADKRVRRDGRFIERLGFYNPTAKENEEGLRIMQDRLTYWKSVGAQSSPTVERLVKQAAKQMA</sequence>
<feature type="chain" id="PRO_1000049374" description="Small ribosomal subunit protein bS16">
    <location>
        <begin position="1"/>
        <end position="83"/>
    </location>
</feature>
<gene>
    <name evidence="1" type="primary">rpsP</name>
    <name type="ordered locus">Veis_3939</name>
</gene>
<protein>
    <recommendedName>
        <fullName evidence="1">Small ribosomal subunit protein bS16</fullName>
    </recommendedName>
    <alternativeName>
        <fullName evidence="2">30S ribosomal protein S16</fullName>
    </alternativeName>
</protein>